<dbReference type="EC" id="5.3.1.28" evidence="1"/>
<dbReference type="EMBL" id="BX950851">
    <property type="protein sequence ID" value="CAG76372.1"/>
    <property type="molecule type" value="Genomic_DNA"/>
</dbReference>
<dbReference type="SMR" id="Q6D1H3"/>
<dbReference type="STRING" id="218491.ECA3473"/>
<dbReference type="KEGG" id="eca:ECA3473"/>
<dbReference type="eggNOG" id="COG0279">
    <property type="taxonomic scope" value="Bacteria"/>
</dbReference>
<dbReference type="HOGENOM" id="CLU_080999_4_0_6"/>
<dbReference type="OrthoDB" id="9810929at2"/>
<dbReference type="UniPathway" id="UPA00041">
    <property type="reaction ID" value="UER00436"/>
</dbReference>
<dbReference type="Proteomes" id="UP000007966">
    <property type="component" value="Chromosome"/>
</dbReference>
<dbReference type="GO" id="GO:0005737">
    <property type="term" value="C:cytoplasm"/>
    <property type="evidence" value="ECO:0007669"/>
    <property type="project" value="UniProtKB-SubCell"/>
</dbReference>
<dbReference type="GO" id="GO:0097367">
    <property type="term" value="F:carbohydrate derivative binding"/>
    <property type="evidence" value="ECO:0007669"/>
    <property type="project" value="InterPro"/>
</dbReference>
<dbReference type="GO" id="GO:0008968">
    <property type="term" value="F:D-sedoheptulose 7-phosphate isomerase activity"/>
    <property type="evidence" value="ECO:0007669"/>
    <property type="project" value="UniProtKB-UniRule"/>
</dbReference>
<dbReference type="GO" id="GO:0008270">
    <property type="term" value="F:zinc ion binding"/>
    <property type="evidence" value="ECO:0007669"/>
    <property type="project" value="UniProtKB-UniRule"/>
</dbReference>
<dbReference type="GO" id="GO:0005975">
    <property type="term" value="P:carbohydrate metabolic process"/>
    <property type="evidence" value="ECO:0007669"/>
    <property type="project" value="UniProtKB-UniRule"/>
</dbReference>
<dbReference type="GO" id="GO:2001061">
    <property type="term" value="P:D-glycero-D-manno-heptose 7-phosphate biosynthetic process"/>
    <property type="evidence" value="ECO:0007669"/>
    <property type="project" value="UniProtKB-UniPathway"/>
</dbReference>
<dbReference type="CDD" id="cd05006">
    <property type="entry name" value="SIS_GmhA"/>
    <property type="match status" value="1"/>
</dbReference>
<dbReference type="FunFam" id="3.40.50.10490:FF:000013">
    <property type="entry name" value="Phosphoheptose isomerase"/>
    <property type="match status" value="1"/>
</dbReference>
<dbReference type="Gene3D" id="3.40.50.10490">
    <property type="entry name" value="Glucose-6-phosphate isomerase like protein, domain 1"/>
    <property type="match status" value="1"/>
</dbReference>
<dbReference type="HAMAP" id="MF_00067">
    <property type="entry name" value="GmhA"/>
    <property type="match status" value="1"/>
</dbReference>
<dbReference type="InterPro" id="IPR035461">
    <property type="entry name" value="GmhA/DiaA"/>
</dbReference>
<dbReference type="InterPro" id="IPR004515">
    <property type="entry name" value="Phosphoheptose_Isoase"/>
</dbReference>
<dbReference type="InterPro" id="IPR001347">
    <property type="entry name" value="SIS_dom"/>
</dbReference>
<dbReference type="InterPro" id="IPR046348">
    <property type="entry name" value="SIS_dom_sf"/>
</dbReference>
<dbReference type="InterPro" id="IPR050099">
    <property type="entry name" value="SIS_GmhA/DiaA_subfam"/>
</dbReference>
<dbReference type="NCBIfam" id="TIGR00441">
    <property type="entry name" value="gmhA"/>
    <property type="match status" value="1"/>
</dbReference>
<dbReference type="NCBIfam" id="NF001628">
    <property type="entry name" value="PRK00414.1"/>
    <property type="match status" value="1"/>
</dbReference>
<dbReference type="PANTHER" id="PTHR30390:SF7">
    <property type="entry name" value="PHOSPHOHEPTOSE ISOMERASE"/>
    <property type="match status" value="1"/>
</dbReference>
<dbReference type="PANTHER" id="PTHR30390">
    <property type="entry name" value="SEDOHEPTULOSE 7-PHOSPHATE ISOMERASE / DNAA INITIATOR-ASSOCIATING FACTOR FOR REPLICATION INITIATION"/>
    <property type="match status" value="1"/>
</dbReference>
<dbReference type="Pfam" id="PF13580">
    <property type="entry name" value="SIS_2"/>
    <property type="match status" value="1"/>
</dbReference>
<dbReference type="SUPFAM" id="SSF53697">
    <property type="entry name" value="SIS domain"/>
    <property type="match status" value="1"/>
</dbReference>
<dbReference type="PROSITE" id="PS51464">
    <property type="entry name" value="SIS"/>
    <property type="match status" value="1"/>
</dbReference>
<reference key="1">
    <citation type="journal article" date="2004" name="Proc. Natl. Acad. Sci. U.S.A.">
        <title>Genome sequence of the enterobacterial phytopathogen Erwinia carotovora subsp. atroseptica and characterization of virulence factors.</title>
        <authorList>
            <person name="Bell K.S."/>
            <person name="Sebaihia M."/>
            <person name="Pritchard L."/>
            <person name="Holden M.T.G."/>
            <person name="Hyman L.J."/>
            <person name="Holeva M.C."/>
            <person name="Thomson N.R."/>
            <person name="Bentley S.D."/>
            <person name="Churcher L.J.C."/>
            <person name="Mungall K."/>
            <person name="Atkin R."/>
            <person name="Bason N."/>
            <person name="Brooks K."/>
            <person name="Chillingworth T."/>
            <person name="Clark K."/>
            <person name="Doggett J."/>
            <person name="Fraser A."/>
            <person name="Hance Z."/>
            <person name="Hauser H."/>
            <person name="Jagels K."/>
            <person name="Moule S."/>
            <person name="Norbertczak H."/>
            <person name="Ormond D."/>
            <person name="Price C."/>
            <person name="Quail M.A."/>
            <person name="Sanders M."/>
            <person name="Walker D."/>
            <person name="Whitehead S."/>
            <person name="Salmond G.P.C."/>
            <person name="Birch P.R.J."/>
            <person name="Parkhill J."/>
            <person name="Toth I.K."/>
        </authorList>
    </citation>
    <scope>NUCLEOTIDE SEQUENCE [LARGE SCALE GENOMIC DNA]</scope>
    <source>
        <strain>SCRI 1043 / ATCC BAA-672</strain>
    </source>
</reference>
<comment type="function">
    <text evidence="1">Catalyzes the isomerization of sedoheptulose 7-phosphate in D-glycero-D-manno-heptose 7-phosphate.</text>
</comment>
<comment type="catalytic activity">
    <reaction evidence="1">
        <text>2 D-sedoheptulose 7-phosphate = D-glycero-alpha-D-manno-heptose 7-phosphate + D-glycero-beta-D-manno-heptose 7-phosphate</text>
        <dbReference type="Rhea" id="RHEA:27489"/>
        <dbReference type="ChEBI" id="CHEBI:57483"/>
        <dbReference type="ChEBI" id="CHEBI:60203"/>
        <dbReference type="ChEBI" id="CHEBI:60204"/>
        <dbReference type="EC" id="5.3.1.28"/>
    </reaction>
</comment>
<comment type="cofactor">
    <cofactor evidence="1">
        <name>Zn(2+)</name>
        <dbReference type="ChEBI" id="CHEBI:29105"/>
    </cofactor>
    <text evidence="1">Binds 1 zinc ion per subunit.</text>
</comment>
<comment type="pathway">
    <text evidence="1">Carbohydrate biosynthesis; D-glycero-D-manno-heptose 7-phosphate biosynthesis; D-glycero-alpha-D-manno-heptose 7-phosphate and D-glycero-beta-D-manno-heptose 7-phosphate from sedoheptulose 7-phosphate: step 1/1.</text>
</comment>
<comment type="subunit">
    <text evidence="1">Homotetramer.</text>
</comment>
<comment type="subcellular location">
    <subcellularLocation>
        <location evidence="1">Cytoplasm</location>
    </subcellularLocation>
</comment>
<comment type="miscellaneous">
    <text evidence="1">The reaction produces a racemic mixture of D-glycero-alpha-D-manno-heptose 7-phosphate and D-glycero-beta-D-manno-heptose 7-phosphate.</text>
</comment>
<comment type="similarity">
    <text evidence="1">Belongs to the SIS family. GmhA subfamily.</text>
</comment>
<organism>
    <name type="scientific">Pectobacterium atrosepticum (strain SCRI 1043 / ATCC BAA-672)</name>
    <name type="common">Erwinia carotovora subsp. atroseptica</name>
    <dbReference type="NCBI Taxonomy" id="218491"/>
    <lineage>
        <taxon>Bacteria</taxon>
        <taxon>Pseudomonadati</taxon>
        <taxon>Pseudomonadota</taxon>
        <taxon>Gammaproteobacteria</taxon>
        <taxon>Enterobacterales</taxon>
        <taxon>Pectobacteriaceae</taxon>
        <taxon>Pectobacterium</taxon>
    </lineage>
</organism>
<feature type="chain" id="PRO_1000009065" description="Phosphoheptose isomerase">
    <location>
        <begin position="1"/>
        <end position="193"/>
    </location>
</feature>
<feature type="domain" description="SIS" evidence="1">
    <location>
        <begin position="37"/>
        <end position="193"/>
    </location>
</feature>
<feature type="binding site" evidence="1">
    <location>
        <begin position="52"/>
        <end position="54"/>
    </location>
    <ligand>
        <name>substrate</name>
    </ligand>
</feature>
<feature type="binding site" evidence="1">
    <location>
        <position position="61"/>
    </location>
    <ligand>
        <name>Zn(2+)</name>
        <dbReference type="ChEBI" id="CHEBI:29105"/>
    </ligand>
</feature>
<feature type="binding site" evidence="1">
    <location>
        <position position="65"/>
    </location>
    <ligand>
        <name>substrate</name>
    </ligand>
</feature>
<feature type="binding site" evidence="1">
    <location>
        <position position="65"/>
    </location>
    <ligand>
        <name>Zn(2+)</name>
        <dbReference type="ChEBI" id="CHEBI:29105"/>
    </ligand>
</feature>
<feature type="binding site" evidence="1">
    <location>
        <begin position="93"/>
        <end position="94"/>
    </location>
    <ligand>
        <name>substrate</name>
    </ligand>
</feature>
<feature type="binding site" evidence="1">
    <location>
        <begin position="119"/>
        <end position="121"/>
    </location>
    <ligand>
        <name>substrate</name>
    </ligand>
</feature>
<feature type="binding site" evidence="1">
    <location>
        <position position="124"/>
    </location>
    <ligand>
        <name>substrate</name>
    </ligand>
</feature>
<feature type="binding site" evidence="1">
    <location>
        <position position="172"/>
    </location>
    <ligand>
        <name>substrate</name>
    </ligand>
</feature>
<feature type="binding site" evidence="1">
    <location>
        <position position="172"/>
    </location>
    <ligand>
        <name>Zn(2+)</name>
        <dbReference type="ChEBI" id="CHEBI:29105"/>
    </ligand>
</feature>
<feature type="binding site" evidence="1">
    <location>
        <position position="180"/>
    </location>
    <ligand>
        <name>Zn(2+)</name>
        <dbReference type="ChEBI" id="CHEBI:29105"/>
    </ligand>
</feature>
<proteinExistence type="inferred from homology"/>
<gene>
    <name evidence="1" type="primary">gmhA</name>
    <name type="ordered locus">ECA3473</name>
</gene>
<name>GMHA_PECAS</name>
<accession>Q6D1H3</accession>
<protein>
    <recommendedName>
        <fullName evidence="1">Phosphoheptose isomerase</fullName>
        <ecNumber evidence="1">5.3.1.28</ecNumber>
    </recommendedName>
    <alternativeName>
        <fullName evidence="1">Sedoheptulose 7-phosphate isomerase</fullName>
    </alternativeName>
</protein>
<evidence type="ECO:0000255" key="1">
    <source>
        <dbReference type="HAMAP-Rule" id="MF_00067"/>
    </source>
</evidence>
<keyword id="KW-0119">Carbohydrate metabolism</keyword>
<keyword id="KW-0963">Cytoplasm</keyword>
<keyword id="KW-0413">Isomerase</keyword>
<keyword id="KW-0479">Metal-binding</keyword>
<keyword id="KW-1185">Reference proteome</keyword>
<keyword id="KW-0862">Zinc</keyword>
<sequence>MYQDLIRSELKEAAETLNNFLSDDANIQSIQNAAVLLANAFKAGGKVISCGNGGSHCDAMHFAEELTGRYRENRPGYPAIAISDPSHLSCVSNDFGYDFVFSRYVESLGREGDVLLGISTSGNSGNIIKAIAAAKAKGMKVITLTGKDGGKMAGSADVEIRVPHFGYADRIQEIHIKAIHILIQLIEKEMADQ</sequence>